<name>AIM24_ZYGRC</name>
<evidence type="ECO:0000250" key="1"/>
<evidence type="ECO:0000255" key="2"/>
<evidence type="ECO:0000305" key="3"/>
<keyword id="KW-0496">Mitochondrion</keyword>
<keyword id="KW-1185">Reference proteome</keyword>
<keyword id="KW-0809">Transit peptide</keyword>
<accession>C5DYJ0</accession>
<organism>
    <name type="scientific">Zygosaccharomyces rouxii (strain ATCC 2623 / CBS 732 / NBRC 1130 / NCYC 568 / NRRL Y-229)</name>
    <dbReference type="NCBI Taxonomy" id="559307"/>
    <lineage>
        <taxon>Eukaryota</taxon>
        <taxon>Fungi</taxon>
        <taxon>Dikarya</taxon>
        <taxon>Ascomycota</taxon>
        <taxon>Saccharomycotina</taxon>
        <taxon>Saccharomycetes</taxon>
        <taxon>Saccharomycetales</taxon>
        <taxon>Saccharomycetaceae</taxon>
        <taxon>Zygosaccharomyces</taxon>
    </lineage>
</organism>
<gene>
    <name type="primary">AIM24</name>
    <name type="ordered locus">ZYRO0F13420g</name>
</gene>
<comment type="subcellular location">
    <subcellularLocation>
        <location evidence="1">Mitochondrion</location>
    </subcellularLocation>
</comment>
<comment type="similarity">
    <text evidence="3">Belongs to the AIM24 family.</text>
</comment>
<feature type="transit peptide" description="Mitochondrion" evidence="2">
    <location>
        <begin position="1"/>
        <end position="22"/>
    </location>
</feature>
<feature type="chain" id="PRO_0000399597" description="Altered inheritance of mitochondria protein 24, mitochondrial">
    <location>
        <begin position="23"/>
        <end position="399"/>
    </location>
</feature>
<dbReference type="EMBL" id="CU928178">
    <property type="protein sequence ID" value="CAR28851.1"/>
    <property type="molecule type" value="Genomic_DNA"/>
</dbReference>
<dbReference type="RefSeq" id="XP_002497784.1">
    <property type="nucleotide sequence ID" value="XM_002497739.1"/>
</dbReference>
<dbReference type="FunCoup" id="C5DYJ0">
    <property type="interactions" value="20"/>
</dbReference>
<dbReference type="GeneID" id="8205552"/>
<dbReference type="KEGG" id="zro:ZYRO0F13420g"/>
<dbReference type="HOGENOM" id="CLU_057912_0_0_1"/>
<dbReference type="InParanoid" id="C5DYJ0"/>
<dbReference type="Proteomes" id="UP000008536">
    <property type="component" value="Chromosome F"/>
</dbReference>
<dbReference type="GO" id="GO:0005743">
    <property type="term" value="C:mitochondrial inner membrane"/>
    <property type="evidence" value="ECO:0007669"/>
    <property type="project" value="TreeGrafter"/>
</dbReference>
<dbReference type="GO" id="GO:0007007">
    <property type="term" value="P:inner mitochondrial membrane organization"/>
    <property type="evidence" value="ECO:0007669"/>
    <property type="project" value="TreeGrafter"/>
</dbReference>
<dbReference type="Gene3D" id="3.60.160.10">
    <property type="entry name" value="Mitochondrial biogenesis AIM24"/>
    <property type="match status" value="1"/>
</dbReference>
<dbReference type="InterPro" id="IPR002838">
    <property type="entry name" value="AIM24"/>
</dbReference>
<dbReference type="InterPro" id="IPR036983">
    <property type="entry name" value="AIM24_sf"/>
</dbReference>
<dbReference type="InterPro" id="IPR016031">
    <property type="entry name" value="Trp_RNA-bd_attenuator-like_dom"/>
</dbReference>
<dbReference type="PANTHER" id="PTHR36959">
    <property type="entry name" value="ALTERED INHERITANCE OF MITOCHONDRIA PROTEIN 24, MITOCHONDRIAL"/>
    <property type="match status" value="1"/>
</dbReference>
<dbReference type="PANTHER" id="PTHR36959:SF2">
    <property type="entry name" value="ALTERED INHERITANCE OF MITOCHONDRIA PROTEIN 24, MITOCHONDRIAL"/>
    <property type="match status" value="1"/>
</dbReference>
<dbReference type="Pfam" id="PF01987">
    <property type="entry name" value="AIM24"/>
    <property type="match status" value="1"/>
</dbReference>
<dbReference type="SUPFAM" id="SSF51219">
    <property type="entry name" value="TRAP-like"/>
    <property type="match status" value="1"/>
</dbReference>
<sequence length="399" mass="44822">MSIPKTFSQVSRRSISLVRPTATTLVPTEAELKTATQTNAEELFDDDDAKKPISTTKFQVLGQPATMASLIVPPSIPLYVRRGCLVSLHGAEKLSMNYEWVHFWSNLIHYRSIKPSIYHKLVSTSKFNALVAPNFLSNRIGPWLGLSSSPFRTLCLLNLNGSADWNVWGQDSVVAYENNSSLSVQPPNPFLIRLRSQAFSSKYQTVQGRGNVLLSGSGSVYTVDLKDAKDEIIIRSEHLLAVSGANRREITNAITEQKLSPPPEMTRKVPSEAGRFFESIRELDGRLFWDSSKAVGIKFWNWTRRIYSRLINGPTKYLKIQGPRTLLIQSSYNVYLPASPINRNSVEQQWAKPDSLAQNPSKNYFNYASVSTNGNVEFEATPNFNETVKKIEESGNKKR</sequence>
<reference key="1">
    <citation type="journal article" date="2009" name="Genome Res.">
        <title>Comparative genomics of protoploid Saccharomycetaceae.</title>
        <authorList>
            <consortium name="The Genolevures Consortium"/>
            <person name="Souciet J.-L."/>
            <person name="Dujon B."/>
            <person name="Gaillardin C."/>
            <person name="Johnston M."/>
            <person name="Baret P.V."/>
            <person name="Cliften P."/>
            <person name="Sherman D.J."/>
            <person name="Weissenbach J."/>
            <person name="Westhof E."/>
            <person name="Wincker P."/>
            <person name="Jubin C."/>
            <person name="Poulain J."/>
            <person name="Barbe V."/>
            <person name="Segurens B."/>
            <person name="Artiguenave F."/>
            <person name="Anthouard V."/>
            <person name="Vacherie B."/>
            <person name="Val M.-E."/>
            <person name="Fulton R.S."/>
            <person name="Minx P."/>
            <person name="Wilson R."/>
            <person name="Durrens P."/>
            <person name="Jean G."/>
            <person name="Marck C."/>
            <person name="Martin T."/>
            <person name="Nikolski M."/>
            <person name="Rolland T."/>
            <person name="Seret M.-L."/>
            <person name="Casaregola S."/>
            <person name="Despons L."/>
            <person name="Fairhead C."/>
            <person name="Fischer G."/>
            <person name="Lafontaine I."/>
            <person name="Leh V."/>
            <person name="Lemaire M."/>
            <person name="de Montigny J."/>
            <person name="Neuveglise C."/>
            <person name="Thierry A."/>
            <person name="Blanc-Lenfle I."/>
            <person name="Bleykasten C."/>
            <person name="Diffels J."/>
            <person name="Fritsch E."/>
            <person name="Frangeul L."/>
            <person name="Goeffon A."/>
            <person name="Jauniaux N."/>
            <person name="Kachouri-Lafond R."/>
            <person name="Payen C."/>
            <person name="Potier S."/>
            <person name="Pribylova L."/>
            <person name="Ozanne C."/>
            <person name="Richard G.-F."/>
            <person name="Sacerdot C."/>
            <person name="Straub M.-L."/>
            <person name="Talla E."/>
        </authorList>
    </citation>
    <scope>NUCLEOTIDE SEQUENCE [LARGE SCALE GENOMIC DNA]</scope>
    <source>
        <strain>ATCC 2623 / CBS 732 / BCRC 21506 / NBRC 1130 / NCYC 568 / NRRL Y-229</strain>
    </source>
</reference>
<proteinExistence type="inferred from homology"/>
<protein>
    <recommendedName>
        <fullName>Altered inheritance of mitochondria protein 24, mitochondrial</fullName>
    </recommendedName>
</protein>